<comment type="function">
    <text evidence="1">Acts as an alpha-ketoglutarate-dependent dioxygenase catalyzing hydroxylation of glutarate (GA) to L-2-hydroxyglutarate (L2HG). Functions in a L-lysine degradation pathway that proceeds via cadaverine, glutarate and L-2-hydroxyglutarate.</text>
</comment>
<comment type="catalytic activity">
    <reaction evidence="1">
        <text>glutarate + 2-oxoglutarate + O2 = (S)-2-hydroxyglutarate + succinate + CO2</text>
        <dbReference type="Rhea" id="RHEA:13821"/>
        <dbReference type="ChEBI" id="CHEBI:15379"/>
        <dbReference type="ChEBI" id="CHEBI:16526"/>
        <dbReference type="ChEBI" id="CHEBI:16782"/>
        <dbReference type="ChEBI" id="CHEBI:16810"/>
        <dbReference type="ChEBI" id="CHEBI:30031"/>
        <dbReference type="ChEBI" id="CHEBI:30921"/>
        <dbReference type="EC" id="1.14.11.64"/>
    </reaction>
    <physiologicalReaction direction="left-to-right" evidence="1">
        <dbReference type="Rhea" id="RHEA:13822"/>
    </physiologicalReaction>
</comment>
<comment type="cofactor">
    <cofactor evidence="1">
        <name>Fe(2+)</name>
        <dbReference type="ChEBI" id="CHEBI:29033"/>
    </cofactor>
    <text evidence="1">Binds 1 Fe(2+) ion per subunit.</text>
</comment>
<comment type="pathway">
    <text evidence="1">Amino-acid degradation.</text>
</comment>
<comment type="subunit">
    <text evidence="1">Homotetramer.</text>
</comment>
<comment type="similarity">
    <text evidence="1">Belongs to the glutarate hydroxylase family.</text>
</comment>
<accession>Q5PEY3</accession>
<reference key="1">
    <citation type="journal article" date="2004" name="Nat. Genet.">
        <title>Comparison of genome degradation in Paratyphi A and Typhi, human-restricted serovars of Salmonella enterica that cause typhoid.</title>
        <authorList>
            <person name="McClelland M."/>
            <person name="Sanderson K.E."/>
            <person name="Clifton S.W."/>
            <person name="Latreille P."/>
            <person name="Porwollik S."/>
            <person name="Sabo A."/>
            <person name="Meyer R."/>
            <person name="Bieri T."/>
            <person name="Ozersky P."/>
            <person name="McLellan M."/>
            <person name="Harkins C.R."/>
            <person name="Wang C."/>
            <person name="Nguyen C."/>
            <person name="Berghoff A."/>
            <person name="Elliott G."/>
            <person name="Kohlberg S."/>
            <person name="Strong C."/>
            <person name="Du F."/>
            <person name="Carter J."/>
            <person name="Kremizki C."/>
            <person name="Layman D."/>
            <person name="Leonard S."/>
            <person name="Sun H."/>
            <person name="Fulton L."/>
            <person name="Nash W."/>
            <person name="Miner T."/>
            <person name="Minx P."/>
            <person name="Delehaunty K."/>
            <person name="Fronick C."/>
            <person name="Magrini V."/>
            <person name="Nhan M."/>
            <person name="Warren W."/>
            <person name="Florea L."/>
            <person name="Spieth J."/>
            <person name="Wilson R.K."/>
        </authorList>
    </citation>
    <scope>NUCLEOTIDE SEQUENCE [LARGE SCALE GENOMIC DNA]</scope>
    <source>
        <strain>ATCC 9150 / SARB42</strain>
    </source>
</reference>
<dbReference type="EC" id="1.14.11.64" evidence="1"/>
<dbReference type="EMBL" id="CP000026">
    <property type="protein sequence ID" value="AAV78510.1"/>
    <property type="molecule type" value="Genomic_DNA"/>
</dbReference>
<dbReference type="RefSeq" id="WP_000993100.1">
    <property type="nucleotide sequence ID" value="NC_006511.1"/>
</dbReference>
<dbReference type="SMR" id="Q5PEY3"/>
<dbReference type="KEGG" id="spt:SPA2646"/>
<dbReference type="HOGENOM" id="CLU_075277_0_0_6"/>
<dbReference type="Proteomes" id="UP000008185">
    <property type="component" value="Chromosome"/>
</dbReference>
<dbReference type="GO" id="GO:0008198">
    <property type="term" value="F:ferrous iron binding"/>
    <property type="evidence" value="ECO:0007669"/>
    <property type="project" value="UniProtKB-UniRule"/>
</dbReference>
<dbReference type="GO" id="GO:0106343">
    <property type="term" value="F:glutarate dioxygenase activity"/>
    <property type="evidence" value="ECO:0007669"/>
    <property type="project" value="UniProtKB-EC"/>
</dbReference>
<dbReference type="GO" id="GO:0050498">
    <property type="term" value="F:oxidoreductase activity, acting on paired donors, with incorporation or reduction of molecular oxygen, with 2-oxoglutarate as one donor, and the other dehydrogenated"/>
    <property type="evidence" value="ECO:0007669"/>
    <property type="project" value="UniProtKB-UniRule"/>
</dbReference>
<dbReference type="GO" id="GO:0019477">
    <property type="term" value="P:L-lysine catabolic process"/>
    <property type="evidence" value="ECO:0007669"/>
    <property type="project" value="UniProtKB-UniRule"/>
</dbReference>
<dbReference type="CDD" id="cd00250">
    <property type="entry name" value="CAS_like"/>
    <property type="match status" value="1"/>
</dbReference>
<dbReference type="FunFam" id="3.60.130.10:FF:000004">
    <property type="entry name" value="Glutarate 2-hydroxylase"/>
    <property type="match status" value="1"/>
</dbReference>
<dbReference type="Gene3D" id="3.60.130.10">
    <property type="entry name" value="Clavaminate synthase-like"/>
    <property type="match status" value="1"/>
</dbReference>
<dbReference type="HAMAP" id="MF_01083">
    <property type="entry name" value="glutarate_hydroxylase"/>
    <property type="match status" value="1"/>
</dbReference>
<dbReference type="InterPro" id="IPR015038">
    <property type="entry name" value="GlaH"/>
</dbReference>
<dbReference type="InterPro" id="IPR042098">
    <property type="entry name" value="TauD-like_sf"/>
</dbReference>
<dbReference type="NCBIfam" id="NF002814">
    <property type="entry name" value="PRK02963.1"/>
    <property type="match status" value="1"/>
</dbReference>
<dbReference type="Pfam" id="PF08943">
    <property type="entry name" value="CsiD"/>
    <property type="match status" value="1"/>
</dbReference>
<dbReference type="SUPFAM" id="SSF51197">
    <property type="entry name" value="Clavaminate synthase-like"/>
    <property type="match status" value="1"/>
</dbReference>
<sequence length="325" mass="37261">MNALTAVKANTDDLAQRHTGFTLAPSAQSPRLLALTFTADTTRQFLHQVAQWPVQALEYKSFLRFKIGKILDDLCGNQLQPLLIKTLLNRAQGALLISAEGIDDVAQAEEMVKLATAVAHLIGRSNYDAMSGQYYARFVVKNVDNSDSYLRQPHRVMELHNDGTYVEEVTDYVLMMKIDEQNMEGGNSLLLHLDDWEHLESFFTHPLARRVMRWAAPPSKNVSHDVWHPVFDVDQQGRPVMRYIDQFVQPKDFEEGVWLSELSDALETSQNILSVPVPVGKFLLINNLFWLHGRDRFTPHPDLRRELMRQRGYFAYAASHYQTHQ</sequence>
<organism>
    <name type="scientific">Salmonella paratyphi A (strain ATCC 9150 / SARB42)</name>
    <dbReference type="NCBI Taxonomy" id="295319"/>
    <lineage>
        <taxon>Bacteria</taxon>
        <taxon>Pseudomonadati</taxon>
        <taxon>Pseudomonadota</taxon>
        <taxon>Gammaproteobacteria</taxon>
        <taxon>Enterobacterales</taxon>
        <taxon>Enterobacteriaceae</taxon>
        <taxon>Salmonella</taxon>
    </lineage>
</organism>
<gene>
    <name evidence="1" type="primary">glaH</name>
    <name type="ordered locus">SPA2646</name>
</gene>
<protein>
    <recommendedName>
        <fullName evidence="1">Glutarate 2-hydroxylase</fullName>
        <shortName evidence="1">G-2-H</shortName>
        <ecNumber evidence="1">1.14.11.64</ecNumber>
    </recommendedName>
</protein>
<proteinExistence type="inferred from homology"/>
<keyword id="KW-0223">Dioxygenase</keyword>
<keyword id="KW-0408">Iron</keyword>
<keyword id="KW-0479">Metal-binding</keyword>
<keyword id="KW-0560">Oxidoreductase</keyword>
<feature type="chain" id="PRO_1000064812" description="Glutarate 2-hydroxylase">
    <location>
        <begin position="1"/>
        <end position="325"/>
    </location>
</feature>
<feature type="binding site" evidence="1">
    <location>
        <position position="160"/>
    </location>
    <ligand>
        <name>Fe cation</name>
        <dbReference type="ChEBI" id="CHEBI:24875"/>
    </ligand>
</feature>
<feature type="binding site" evidence="1">
    <location>
        <position position="162"/>
    </location>
    <ligand>
        <name>Fe cation</name>
        <dbReference type="ChEBI" id="CHEBI:24875"/>
    </ligand>
</feature>
<feature type="binding site" evidence="1">
    <location>
        <position position="292"/>
    </location>
    <ligand>
        <name>Fe cation</name>
        <dbReference type="ChEBI" id="CHEBI:24875"/>
    </ligand>
</feature>
<evidence type="ECO:0000255" key="1">
    <source>
        <dbReference type="HAMAP-Rule" id="MF_01083"/>
    </source>
</evidence>
<name>GLAH_SALPA</name>